<gene>
    <name evidence="10" type="primary">RPL12B</name>
    <name type="synonym">RPL15A</name>
    <name type="ordered locus">YDR418W</name>
    <name type="ORF">D9461.7</name>
</gene>
<comment type="function">
    <text evidence="12">Component of the ribosome, a large ribonucleoprotein complex responsible for the synthesis of proteins in the cell. The small ribosomal subunit (SSU) binds messenger RNAs (mRNAs) and translates the encoded message by selecting cognate aminoacyl-transfer RNA (tRNA) molecules. The large subunit (LSU) contains the ribosomal catalytic site termed the peptidyl transferase center (PTC), which catalyzes the formation of peptide bonds, thereby polymerizing the amino acids delivered by tRNAs into a polypeptide chain. The nascent polypeptides leave the ribosome through a tunnel in the LSU and interact with protein factors that function in enzymatic processing, targeting, and the membrane insertion of nascent chains at the exit of the ribosomal tunnel.</text>
</comment>
<comment type="subunit">
    <text evidence="8 13">Component of the large ribosomal subunit (LSU). Mature yeast ribosomes consist of a small (40S) and a large (60S) subunit. The 40S small subunit contains 1 molecule of ribosomal RNA (18S rRNA) and 33 different proteins (encoded by 57 genes). The large 60S subunit contains 3 rRNA molecules (25S, 5.8S and 5S rRNA) and 46 different proteins (encoded by 81 genes) (PubMed:22096102, PubMed:9559554).</text>
</comment>
<comment type="subcellular location">
    <subcellularLocation>
        <location evidence="3 8">Cytoplasm</location>
    </subcellularLocation>
</comment>
<comment type="PTM">
    <text evidence="1 5 6 7">It appears that the main modified species for L12 contains 6 methyl groups, 2 on Pro-2, 3 on Lys-4 and 1 on Arg-67. Although not reproduced with a second method, methylation at Lys-11 cannot be ruled out.</text>
</comment>
<comment type="mass spectrometry" mass="17764.713" method="Electrospray" evidence="2">
    <text>Monoisotopic mass with either 6 methylation modifications or 1 acetylation and 3 methylation modifications.</text>
</comment>
<comment type="miscellaneous">
    <text evidence="4">Present with 50300 molecules/cell in log phase SD medium.</text>
</comment>
<comment type="miscellaneous">
    <text evidence="11">There are 2 genes for uL11 in yeast.</text>
</comment>
<comment type="similarity">
    <text evidence="11">Belongs to the universal ribosomal protein uL11 family.</text>
</comment>
<sequence length="165" mass="17823">MPPKFDPNEVKYLYLRAVGGEVGASAALAPKIGPLGLSPKKVGEDIAKATKEFKGIKVTVQLKIQNRQAAASVVPSASSLVITALKEPPRDRKKDKNVKHSGNIQLDEIIEIARQMRDKSFGRTLASVTKEILGTAQSVGCRVDFKNPHDIIEGINAGEIEIPEN</sequence>
<keyword id="KW-0002">3D-structure</keyword>
<keyword id="KW-0963">Cytoplasm</keyword>
<keyword id="KW-0903">Direct protein sequencing</keyword>
<keyword id="KW-1017">Isopeptide bond</keyword>
<keyword id="KW-0488">Methylation</keyword>
<keyword id="KW-0597">Phosphoprotein</keyword>
<keyword id="KW-1185">Reference proteome</keyword>
<keyword id="KW-0687">Ribonucleoprotein</keyword>
<keyword id="KW-0689">Ribosomal protein</keyword>
<keyword id="KW-0694">RNA-binding</keyword>
<keyword id="KW-0832">Ubl conjugation</keyword>
<organism>
    <name type="scientific">Saccharomyces cerevisiae (strain ATCC 204508 / S288c)</name>
    <name type="common">Baker's yeast</name>
    <dbReference type="NCBI Taxonomy" id="559292"/>
    <lineage>
        <taxon>Eukaryota</taxon>
        <taxon>Fungi</taxon>
        <taxon>Dikarya</taxon>
        <taxon>Ascomycota</taxon>
        <taxon>Saccharomycotina</taxon>
        <taxon>Saccharomycetes</taxon>
        <taxon>Saccharomycetales</taxon>
        <taxon>Saccharomycetaceae</taxon>
        <taxon>Saccharomyces</taxon>
    </lineage>
</organism>
<evidence type="ECO:0000269" key="1">
    <source>
    </source>
</evidence>
<evidence type="ECO:0000269" key="2">
    <source>
    </source>
</evidence>
<evidence type="ECO:0000269" key="3">
    <source>
    </source>
</evidence>
<evidence type="ECO:0000269" key="4">
    <source>
    </source>
</evidence>
<evidence type="ECO:0000269" key="5">
    <source>
    </source>
</evidence>
<evidence type="ECO:0000269" key="6">
    <source>
    </source>
</evidence>
<evidence type="ECO:0000269" key="7">
    <source>
    </source>
</evidence>
<evidence type="ECO:0000269" key="8">
    <source>
    </source>
</evidence>
<evidence type="ECO:0000303" key="9">
    <source>
    </source>
</evidence>
<evidence type="ECO:0000303" key="10">
    <source>
    </source>
</evidence>
<evidence type="ECO:0000305" key="11"/>
<evidence type="ECO:0000305" key="12">
    <source>
    </source>
</evidence>
<evidence type="ECO:0000305" key="13">
    <source>
    </source>
</evidence>
<evidence type="ECO:0007744" key="14">
    <source>
    </source>
</evidence>
<evidence type="ECO:0007744" key="15">
    <source>
    </source>
</evidence>
<evidence type="ECO:0007744" key="16">
    <source>
    </source>
</evidence>
<accession>P0CX54</accession>
<accession>D3DLJ6</accession>
<accession>P05741</accession>
<accession>P17079</accession>
<feature type="initiator methionine" description="Removed" evidence="5">
    <location>
        <position position="1"/>
    </location>
</feature>
<feature type="chain" id="PRO_0000409773" description="Large ribosomal subunit protein uL11B">
    <location>
        <begin position="2"/>
        <end position="165"/>
    </location>
</feature>
<feature type="modified residue" description="N,N-dimethylproline; by NTM1" evidence="6 7">
    <location>
        <position position="2"/>
    </location>
</feature>
<feature type="modified residue" description="N6,N6,N6-trimethyllysine; by RKM2" evidence="5 6">
    <location>
        <position position="4"/>
    </location>
</feature>
<feature type="modified residue" description="N6,N6,N6-trimethyllysine; by RKM2" evidence="5">
    <location>
        <position position="11"/>
    </location>
</feature>
<feature type="modified residue" description="Phosphoserine" evidence="15">
    <location>
        <position position="25"/>
    </location>
</feature>
<feature type="modified residue" description="Phosphoserine" evidence="14 15">
    <location>
        <position position="38"/>
    </location>
</feature>
<feature type="modified residue" description="N5-methylarginine; by RMT2" evidence="1 6">
    <location>
        <position position="67"/>
    </location>
</feature>
<feature type="cross-link" description="Glycyl lysine isopeptide (Lys-Gly) (interchain with G-Cter in ubiquitin)" evidence="16">
    <location>
        <position position="130"/>
    </location>
</feature>
<feature type="cross-link" description="Glycyl lysine isopeptide (Lys-Gly) (interchain with G-Cter in ubiquitin)" evidence="16">
    <location>
        <position position="146"/>
    </location>
</feature>
<feature type="mutagenesis site" description="Abolishes monomethylation by RMT2." evidence="1">
    <original>R</original>
    <variation>K</variation>
    <location>
        <position position="67"/>
    </location>
</feature>
<dbReference type="EMBL" id="X51520">
    <property type="protein sequence ID" value="CAA35892.1"/>
    <property type="molecule type" value="Genomic_DNA"/>
</dbReference>
<dbReference type="EMBL" id="U33007">
    <property type="protein sequence ID" value="AAB64852.1"/>
    <property type="molecule type" value="Genomic_DNA"/>
</dbReference>
<dbReference type="EMBL" id="BK006938">
    <property type="protein sequence ID" value="DAA12258.1"/>
    <property type="molecule type" value="Genomic_DNA"/>
</dbReference>
<dbReference type="PIR" id="S13665">
    <property type="entry name" value="S13665"/>
</dbReference>
<dbReference type="RefSeq" id="NP_010706.3">
    <property type="nucleotide sequence ID" value="NM_001180726.3"/>
</dbReference>
<dbReference type="PDB" id="8AGU">
    <property type="method" value="EM"/>
    <property type="resolution" value="2.70 A"/>
    <property type="chains" value="z=1-165"/>
</dbReference>
<dbReference type="PDB" id="8AGV">
    <property type="method" value="EM"/>
    <property type="resolution" value="2.60 A"/>
    <property type="chains" value="z=1-165"/>
</dbReference>
<dbReference type="PDBsum" id="8AGU"/>
<dbReference type="PDBsum" id="8AGV"/>
<dbReference type="SMR" id="P0CX54"/>
<dbReference type="BioGRID" id="32476">
    <property type="interactions" value="204"/>
</dbReference>
<dbReference type="BioGRID" id="36675">
    <property type="interactions" value="229"/>
</dbReference>
<dbReference type="ComplexPortal" id="CPX-1601">
    <property type="entry name" value="60S cytosolic large ribosomal subunit"/>
</dbReference>
<dbReference type="FunCoup" id="P0CX54">
    <property type="interactions" value="1000"/>
</dbReference>
<dbReference type="IntAct" id="P0CX54">
    <property type="interactions" value="63"/>
</dbReference>
<dbReference type="MINT" id="P0CX54"/>
<dbReference type="iPTMnet" id="P0CX54"/>
<dbReference type="EnsemblFungi" id="YDR418W_mRNA">
    <property type="protein sequence ID" value="YDR418W"/>
    <property type="gene ID" value="YDR418W"/>
</dbReference>
<dbReference type="EnsemblFungi" id="YEL054C_mRNA">
    <property type="protein sequence ID" value="YEL054C"/>
    <property type="gene ID" value="YEL054C"/>
</dbReference>
<dbReference type="GeneID" id="852026"/>
<dbReference type="KEGG" id="sce:YDR418W"/>
<dbReference type="KEGG" id="sce:YEL054C"/>
<dbReference type="AGR" id="SGD:S000002826"/>
<dbReference type="SGD" id="S000002826">
    <property type="gene designation" value="RPL12B"/>
</dbReference>
<dbReference type="VEuPathDB" id="FungiDB:YDR418W"/>
<dbReference type="VEuPathDB" id="FungiDB:YEL054C"/>
<dbReference type="GeneTree" id="ENSGT00390000006922"/>
<dbReference type="HOGENOM" id="CLU_074237_5_0_1"/>
<dbReference type="InParanoid" id="P0CX54"/>
<dbReference type="OMA" id="QPPHDVI"/>
<dbReference type="OrthoDB" id="1478556at2759"/>
<dbReference type="BioCyc" id="YEAST:G3O-29959-MONOMER"/>
<dbReference type="Reactome" id="R-SCE-156827">
    <property type="pathway name" value="L13a-mediated translational silencing of Ceruloplasmin expression"/>
</dbReference>
<dbReference type="Reactome" id="R-SCE-1799339">
    <property type="pathway name" value="SRP-dependent cotranslational protein targeting to membrane"/>
</dbReference>
<dbReference type="Reactome" id="R-SCE-72689">
    <property type="pathway name" value="Formation of a pool of free 40S subunits"/>
</dbReference>
<dbReference type="Reactome" id="R-SCE-72706">
    <property type="pathway name" value="GTP hydrolysis and joining of the 60S ribosomal subunit"/>
</dbReference>
<dbReference type="Reactome" id="R-SCE-975956">
    <property type="pathway name" value="Nonsense Mediated Decay (NMD) independent of the Exon Junction Complex (EJC)"/>
</dbReference>
<dbReference type="Reactome" id="R-SCE-975957">
    <property type="pathway name" value="Nonsense Mediated Decay (NMD) enhanced by the Exon Junction Complex (EJC)"/>
</dbReference>
<dbReference type="BioGRID-ORCS" id="852026">
    <property type="hits" value="3 hits in 10 CRISPR screens"/>
</dbReference>
<dbReference type="BioGRID-ORCS" id="856656">
    <property type="hits" value="1 hit in 10 CRISPR screens"/>
</dbReference>
<dbReference type="PRO" id="PR:P0CX54"/>
<dbReference type="Proteomes" id="UP000002311">
    <property type="component" value="Chromosome IV"/>
</dbReference>
<dbReference type="RNAct" id="P0CX54">
    <property type="molecule type" value="protein"/>
</dbReference>
<dbReference type="ExpressionAtlas" id="P0CX54">
    <property type="expression patterns" value="baseline and differential"/>
</dbReference>
<dbReference type="GO" id="GO:0005829">
    <property type="term" value="C:cytosol"/>
    <property type="evidence" value="ECO:0000304"/>
    <property type="project" value="Reactome"/>
</dbReference>
<dbReference type="GO" id="GO:0022625">
    <property type="term" value="C:cytosolic large ribosomal subunit"/>
    <property type="evidence" value="ECO:0000314"/>
    <property type="project" value="SGD"/>
</dbReference>
<dbReference type="GO" id="GO:0070180">
    <property type="term" value="F:large ribosomal subunit rRNA binding"/>
    <property type="evidence" value="ECO:0000318"/>
    <property type="project" value="GO_Central"/>
</dbReference>
<dbReference type="GO" id="GO:0003735">
    <property type="term" value="F:structural constituent of ribosome"/>
    <property type="evidence" value="ECO:0000318"/>
    <property type="project" value="GO_Central"/>
</dbReference>
<dbReference type="GO" id="GO:0002181">
    <property type="term" value="P:cytoplasmic translation"/>
    <property type="evidence" value="ECO:0000305"/>
    <property type="project" value="SGD"/>
</dbReference>
<dbReference type="GO" id="GO:0000027">
    <property type="term" value="P:ribosomal large subunit assembly"/>
    <property type="evidence" value="ECO:0000315"/>
    <property type="project" value="SGD"/>
</dbReference>
<dbReference type="GO" id="GO:0006412">
    <property type="term" value="P:translation"/>
    <property type="evidence" value="ECO:0000318"/>
    <property type="project" value="GO_Central"/>
</dbReference>
<dbReference type="CDD" id="cd00349">
    <property type="entry name" value="Ribosomal_L11"/>
    <property type="match status" value="1"/>
</dbReference>
<dbReference type="FunFam" id="1.10.10.250:FF:000002">
    <property type="entry name" value="60S ribosomal protein L12"/>
    <property type="match status" value="1"/>
</dbReference>
<dbReference type="FunFam" id="3.30.1550.10:FF:000002">
    <property type="entry name" value="60S ribosomal protein L12"/>
    <property type="match status" value="1"/>
</dbReference>
<dbReference type="Gene3D" id="1.10.10.250">
    <property type="entry name" value="Ribosomal protein L11, C-terminal domain"/>
    <property type="match status" value="1"/>
</dbReference>
<dbReference type="Gene3D" id="3.30.1550.10">
    <property type="entry name" value="Ribosomal protein L11/L12, N-terminal domain"/>
    <property type="match status" value="1"/>
</dbReference>
<dbReference type="HAMAP" id="MF_00736">
    <property type="entry name" value="Ribosomal_uL11"/>
    <property type="match status" value="1"/>
</dbReference>
<dbReference type="InterPro" id="IPR000911">
    <property type="entry name" value="Ribosomal_uL11"/>
</dbReference>
<dbReference type="InterPro" id="IPR020783">
    <property type="entry name" value="Ribosomal_uL11_C"/>
</dbReference>
<dbReference type="InterPro" id="IPR036769">
    <property type="entry name" value="Ribosomal_uL11_C_sf"/>
</dbReference>
<dbReference type="InterPro" id="IPR020785">
    <property type="entry name" value="Ribosomal_uL11_CS"/>
</dbReference>
<dbReference type="InterPro" id="IPR020784">
    <property type="entry name" value="Ribosomal_uL11_N"/>
</dbReference>
<dbReference type="InterPro" id="IPR036796">
    <property type="entry name" value="Ribosomal_uL11_N_sf"/>
</dbReference>
<dbReference type="PANTHER" id="PTHR11661">
    <property type="entry name" value="60S RIBOSOMAL PROTEIN L12"/>
    <property type="match status" value="1"/>
</dbReference>
<dbReference type="PANTHER" id="PTHR11661:SF2">
    <property type="entry name" value="LARGE RIBOSOMAL SUBUNIT PROTEIN UL11"/>
    <property type="match status" value="1"/>
</dbReference>
<dbReference type="Pfam" id="PF00298">
    <property type="entry name" value="Ribosomal_L11"/>
    <property type="match status" value="1"/>
</dbReference>
<dbReference type="Pfam" id="PF03946">
    <property type="entry name" value="Ribosomal_L11_N"/>
    <property type="match status" value="1"/>
</dbReference>
<dbReference type="SMART" id="SM00649">
    <property type="entry name" value="RL11"/>
    <property type="match status" value="1"/>
</dbReference>
<dbReference type="SUPFAM" id="SSF54747">
    <property type="entry name" value="Ribosomal L11/L12e N-terminal domain"/>
    <property type="match status" value="1"/>
</dbReference>
<dbReference type="SUPFAM" id="SSF46906">
    <property type="entry name" value="Ribosomal protein L11, C-terminal domain"/>
    <property type="match status" value="1"/>
</dbReference>
<dbReference type="PROSITE" id="PS00359">
    <property type="entry name" value="RIBOSOMAL_L11"/>
    <property type="match status" value="1"/>
</dbReference>
<reference key="1">
    <citation type="journal article" date="1990" name="Nucleic Acids Res.">
        <title>The 26S rRNA binding ribosomal protein equivalent to bacterial protein L11 is encoded by unspliced duplicated genes in Saccharomyces cerevisiae.</title>
        <authorList>
            <person name="Pucciarelli G."/>
            <person name="Remacha M."/>
            <person name="Ballesta J.P.G."/>
        </authorList>
    </citation>
    <scope>NUCLEOTIDE SEQUENCE [GENOMIC DNA]</scope>
    <source>
        <strain>Y166</strain>
    </source>
</reference>
<reference key="2">
    <citation type="journal article" date="1997" name="Nature">
        <title>The nucleotide sequence of Saccharomyces cerevisiae chromosome IV.</title>
        <authorList>
            <person name="Jacq C."/>
            <person name="Alt-Moerbe J."/>
            <person name="Andre B."/>
            <person name="Arnold W."/>
            <person name="Bahr A."/>
            <person name="Ballesta J.P.G."/>
            <person name="Bargues M."/>
            <person name="Baron L."/>
            <person name="Becker A."/>
            <person name="Biteau N."/>
            <person name="Bloecker H."/>
            <person name="Blugeon C."/>
            <person name="Boskovic J."/>
            <person name="Brandt P."/>
            <person name="Brueckner M."/>
            <person name="Buitrago M.J."/>
            <person name="Coster F."/>
            <person name="Delaveau T."/>
            <person name="del Rey F."/>
            <person name="Dujon B."/>
            <person name="Eide L.G."/>
            <person name="Garcia-Cantalejo J.M."/>
            <person name="Goffeau A."/>
            <person name="Gomez-Peris A."/>
            <person name="Granotier C."/>
            <person name="Hanemann V."/>
            <person name="Hankeln T."/>
            <person name="Hoheisel J.D."/>
            <person name="Jaeger W."/>
            <person name="Jimenez A."/>
            <person name="Jonniaux J.-L."/>
            <person name="Kraemer C."/>
            <person name="Kuester H."/>
            <person name="Laamanen P."/>
            <person name="Legros Y."/>
            <person name="Louis E.J."/>
            <person name="Moeller-Rieker S."/>
            <person name="Monnet A."/>
            <person name="Moro M."/>
            <person name="Mueller-Auer S."/>
            <person name="Nussbaumer B."/>
            <person name="Paricio N."/>
            <person name="Paulin L."/>
            <person name="Perea J."/>
            <person name="Perez-Alonso M."/>
            <person name="Perez-Ortin J.E."/>
            <person name="Pohl T.M."/>
            <person name="Prydz H."/>
            <person name="Purnelle B."/>
            <person name="Rasmussen S.W."/>
            <person name="Remacha M.A."/>
            <person name="Revuelta J.L."/>
            <person name="Rieger M."/>
            <person name="Salom D."/>
            <person name="Saluz H.P."/>
            <person name="Saiz J.E."/>
            <person name="Saren A.-M."/>
            <person name="Schaefer M."/>
            <person name="Scharfe M."/>
            <person name="Schmidt E.R."/>
            <person name="Schneider C."/>
            <person name="Scholler P."/>
            <person name="Schwarz S."/>
            <person name="Soler-Mira A."/>
            <person name="Urrestarazu L.A."/>
            <person name="Verhasselt P."/>
            <person name="Vissers S."/>
            <person name="Voet M."/>
            <person name="Volckaert G."/>
            <person name="Wagner G."/>
            <person name="Wambutt R."/>
            <person name="Wedler E."/>
            <person name="Wedler H."/>
            <person name="Woelfl S."/>
            <person name="Harris D.E."/>
            <person name="Bowman S."/>
            <person name="Brown D."/>
            <person name="Churcher C.M."/>
            <person name="Connor R."/>
            <person name="Dedman K."/>
            <person name="Gentles S."/>
            <person name="Hamlin N."/>
            <person name="Hunt S."/>
            <person name="Jones L."/>
            <person name="McDonald S."/>
            <person name="Murphy L.D."/>
            <person name="Niblett D."/>
            <person name="Odell C."/>
            <person name="Oliver K."/>
            <person name="Rajandream M.A."/>
            <person name="Richards C."/>
            <person name="Shore L."/>
            <person name="Walsh S.V."/>
            <person name="Barrell B.G."/>
            <person name="Dietrich F.S."/>
            <person name="Mulligan J.T."/>
            <person name="Allen E."/>
            <person name="Araujo R."/>
            <person name="Aviles E."/>
            <person name="Berno A."/>
            <person name="Carpenter J."/>
            <person name="Chen E."/>
            <person name="Cherry J.M."/>
            <person name="Chung E."/>
            <person name="Duncan M."/>
            <person name="Hunicke-Smith S."/>
            <person name="Hyman R.W."/>
            <person name="Komp C."/>
            <person name="Lashkari D."/>
            <person name="Lew H."/>
            <person name="Lin D."/>
            <person name="Mosedale D."/>
            <person name="Nakahara K."/>
            <person name="Namath A."/>
            <person name="Oefner P."/>
            <person name="Oh C."/>
            <person name="Petel F.X."/>
            <person name="Roberts D."/>
            <person name="Schramm S."/>
            <person name="Schroeder M."/>
            <person name="Shogren T."/>
            <person name="Shroff N."/>
            <person name="Winant A."/>
            <person name="Yelton M.A."/>
            <person name="Botstein D."/>
            <person name="Davis R.W."/>
            <person name="Johnston M."/>
            <person name="Andrews S."/>
            <person name="Brinkman R."/>
            <person name="Cooper J."/>
            <person name="Ding H."/>
            <person name="Du Z."/>
            <person name="Favello A."/>
            <person name="Fulton L."/>
            <person name="Gattung S."/>
            <person name="Greco T."/>
            <person name="Hallsworth K."/>
            <person name="Hawkins J."/>
            <person name="Hillier L.W."/>
            <person name="Jier M."/>
            <person name="Johnson D."/>
            <person name="Johnston L."/>
            <person name="Kirsten J."/>
            <person name="Kucaba T."/>
            <person name="Langston Y."/>
            <person name="Latreille P."/>
            <person name="Le T."/>
            <person name="Mardis E."/>
            <person name="Menezes S."/>
            <person name="Miller N."/>
            <person name="Nhan M."/>
            <person name="Pauley A."/>
            <person name="Peluso D."/>
            <person name="Rifkin L."/>
            <person name="Riles L."/>
            <person name="Taich A."/>
            <person name="Trevaskis E."/>
            <person name="Vignati D."/>
            <person name="Wilcox L."/>
            <person name="Wohldman P."/>
            <person name="Vaudin M."/>
            <person name="Wilson R."/>
            <person name="Waterston R."/>
            <person name="Albermann K."/>
            <person name="Hani J."/>
            <person name="Heumann K."/>
            <person name="Kleine K."/>
            <person name="Mewes H.-W."/>
            <person name="Zollner A."/>
            <person name="Zaccaria P."/>
        </authorList>
    </citation>
    <scope>NUCLEOTIDE SEQUENCE [LARGE SCALE GENOMIC DNA]</scope>
    <source>
        <strain>ATCC 204508 / S288c</strain>
    </source>
</reference>
<reference key="3">
    <citation type="journal article" date="2014" name="G3 (Bethesda)">
        <title>The reference genome sequence of Saccharomyces cerevisiae: Then and now.</title>
        <authorList>
            <person name="Engel S.R."/>
            <person name="Dietrich F.S."/>
            <person name="Fisk D.G."/>
            <person name="Binkley G."/>
            <person name="Balakrishnan R."/>
            <person name="Costanzo M.C."/>
            <person name="Dwight S.S."/>
            <person name="Hitz B.C."/>
            <person name="Karra K."/>
            <person name="Nash R.S."/>
            <person name="Weng S."/>
            <person name="Wong E.D."/>
            <person name="Lloyd P."/>
            <person name="Skrzypek M.S."/>
            <person name="Miyasato S.R."/>
            <person name="Simison M."/>
            <person name="Cherry J.M."/>
        </authorList>
    </citation>
    <scope>GENOME REANNOTATION</scope>
    <source>
        <strain>ATCC 204508 / S288c</strain>
    </source>
</reference>
<reference key="4">
    <citation type="journal article" date="2006" name="J. Biol. Chem.">
        <title>A novel SET domain methyltransferase in yeast: Rkm2-dependent trimethylation of ribosomal protein L12ab at lysine 10.</title>
        <authorList>
            <person name="Porras-Yakushi T.R."/>
            <person name="Whitelegge J.P."/>
            <person name="Clarke S."/>
        </authorList>
    </citation>
    <scope>PROTEIN SEQUENCE OF 2-16</scope>
    <scope>METHYLATION AT LYS-4</scope>
    <scope>METHYLATION AT LYS-11 BY RKM2</scope>
    <scope>IDENTIFICATION BY MASS SPECTROMETRY</scope>
</reference>
<reference key="5">
    <citation type="journal article" date="1984" name="Mol. Gen. Genet.">
        <title>Yeast ribosomal proteins. VIII. Isolation of two proteins and sequence characterization of twenty-four proteins from cytoplasmic ribosomes.</title>
        <authorList>
            <person name="Otaka E."/>
            <person name="Higo K."/>
            <person name="Itoh T."/>
        </authorList>
    </citation>
    <scope>PARTIAL PROTEIN SEQUENCE OF 17-36</scope>
</reference>
<reference key="6">
    <citation type="journal article" date="1998" name="Yeast">
        <title>The list of cytoplasmic ribosomal proteins of Saccharomyces cerevisiae.</title>
        <authorList>
            <person name="Planta R.J."/>
            <person name="Mager W.H."/>
        </authorList>
    </citation>
    <scope>NOMENCLATURE</scope>
    <scope>SUBUNIT</scope>
</reference>
<reference key="7">
    <citation type="journal article" date="2002" name="J. Biol. Chem.">
        <title>Yeast ribosomal protein L12 is a substrate of protein-arginine methyltransferase 2.</title>
        <authorList>
            <person name="Chern M.-K."/>
            <person name="Chang K.-N."/>
            <person name="Liu L.-F."/>
            <person name="Tam T.-C.S."/>
            <person name="Liu Y.-C."/>
            <person name="Liang Y.-L."/>
            <person name="Tam M.F."/>
        </authorList>
    </citation>
    <scope>IDENTIFICATION BY MASS SPECTROMETRY</scope>
    <scope>METHYLATION AT ARG-67</scope>
    <scope>MUTAGENESIS OF ARG-67</scope>
</reference>
<reference key="8">
    <citation type="journal article" date="2002" name="Proc. Natl. Acad. Sci. U.S.A.">
        <title>Direct mass spectrometric analysis of intact proteins of the yeast large ribosomal subunit using capillary LC/FTICR.</title>
        <authorList>
            <person name="Lee S.-W."/>
            <person name="Berger S.J."/>
            <person name="Martinovic S."/>
            <person name="Pasa-Tolic L."/>
            <person name="Anderson G.A."/>
            <person name="Shen Y."/>
            <person name="Zhao R."/>
            <person name="Smith R.D."/>
        </authorList>
    </citation>
    <scope>MASS SPECTROMETRY</scope>
</reference>
<reference key="9">
    <citation type="journal article" date="2003" name="Nature">
        <title>Global analysis of protein localization in budding yeast.</title>
        <authorList>
            <person name="Huh W.-K."/>
            <person name="Falvo J.V."/>
            <person name="Gerke L.C."/>
            <person name="Carroll A.S."/>
            <person name="Howson R.W."/>
            <person name="Weissman J.S."/>
            <person name="O'Shea E.K."/>
        </authorList>
    </citation>
    <scope>SUBCELLULAR LOCATION [LARGE SCALE ANALYSIS]</scope>
</reference>
<reference key="10">
    <citation type="journal article" date="2003" name="Nature">
        <title>Global analysis of protein expression in yeast.</title>
        <authorList>
            <person name="Ghaemmaghami S."/>
            <person name="Huh W.-K."/>
            <person name="Bower K."/>
            <person name="Howson R.W."/>
            <person name="Belle A."/>
            <person name="Dephoure N."/>
            <person name="O'Shea E.K."/>
            <person name="Weissman J.S."/>
        </authorList>
    </citation>
    <scope>LEVEL OF PROTEIN EXPRESSION [LARGE SCALE ANALYSIS]</scope>
</reference>
<reference key="11">
    <citation type="journal article" date="2008" name="J. Biol. Chem.">
        <title>Identification of two SET domain proteins required for methylation of lysine residues in yeast ribosomal protein Rpl42ab.</title>
        <authorList>
            <person name="Webb K.J."/>
            <person name="Laganowsky A."/>
            <person name="Whitelegge J.P."/>
            <person name="Clarke S.G."/>
        </authorList>
    </citation>
    <scope>METHYLATION AT PRO-2 AND ARG-67</scope>
    <scope>METHYLATION AT LYS-4 BY RKM2</scope>
</reference>
<reference key="12">
    <citation type="journal article" date="2008" name="Mol. Cell. Proteomics">
        <title>A multidimensional chromatography technology for in-depth phosphoproteome analysis.</title>
        <authorList>
            <person name="Albuquerque C.P."/>
            <person name="Smolka M.B."/>
            <person name="Payne S.H."/>
            <person name="Bafna V."/>
            <person name="Eng J."/>
            <person name="Zhou H."/>
        </authorList>
    </citation>
    <scope>PHOSPHORYLATION [LARGE SCALE ANALYSIS] AT SER-38</scope>
    <scope>IDENTIFICATION BY MASS SPECTROMETRY [LARGE SCALE ANALYSIS]</scope>
</reference>
<reference key="13">
    <citation type="journal article" date="2009" name="Science">
        <title>Global analysis of Cdk1 substrate phosphorylation sites provides insights into evolution.</title>
        <authorList>
            <person name="Holt L.J."/>
            <person name="Tuch B.B."/>
            <person name="Villen J."/>
            <person name="Johnson A.D."/>
            <person name="Gygi S.P."/>
            <person name="Morgan D.O."/>
        </authorList>
    </citation>
    <scope>PHOSPHORYLATION [LARGE SCALE ANALYSIS] AT SER-25 AND SER-38</scope>
    <scope>IDENTIFICATION BY MASS SPECTROMETRY [LARGE SCALE ANALYSIS]</scope>
</reference>
<reference key="14">
    <citation type="journal article" date="2010" name="Biochemistry">
        <title>Identification of protein N-terminal methyltransferases in yeast and humans.</title>
        <authorList>
            <person name="Webb K.J."/>
            <person name="Lipson R.S."/>
            <person name="Al-Hadid Q."/>
            <person name="Whitelegge J.P."/>
            <person name="Clarke S.G."/>
        </authorList>
    </citation>
    <scope>METHYLATION AT PRO-2 BY NTM1/TAE1</scope>
</reference>
<reference key="15">
    <citation type="journal article" date="2011" name="Science">
        <title>The structure of the eukaryotic ribosome at 3.0 A resolution.</title>
        <authorList>
            <person name="Ben-Shem A."/>
            <person name="Garreau de Loubresse N."/>
            <person name="Melnikov S."/>
            <person name="Jenner L."/>
            <person name="Yusupova G."/>
            <person name="Yusupov M."/>
        </authorList>
    </citation>
    <scope>SUBUNIT</scope>
    <scope>SUBCELLULAR LOCATION</scope>
</reference>
<reference key="16">
    <citation type="journal article" date="2012" name="Proteomics">
        <title>Sites of ubiquitin attachment in Saccharomyces cerevisiae.</title>
        <authorList>
            <person name="Starita L.M."/>
            <person name="Lo R.S."/>
            <person name="Eng J.K."/>
            <person name="von Haller P.D."/>
            <person name="Fields S."/>
        </authorList>
    </citation>
    <scope>UBIQUITINATION [LARGE SCALE ANALYSIS] AT LYS-130 AND LYS-146</scope>
    <scope>IDENTIFICATION BY MASS SPECTROMETRY [LARGE SCALE ANALYSIS]</scope>
</reference>
<reference key="17">
    <citation type="journal article" date="2014" name="Curr. Opin. Struct. Biol.">
        <title>A new system for naming ribosomal proteins.</title>
        <authorList>
            <person name="Ban N."/>
            <person name="Beckmann R."/>
            <person name="Cate J.H.D."/>
            <person name="Dinman J.D."/>
            <person name="Dragon F."/>
            <person name="Ellis S.R."/>
            <person name="Lafontaine D.L.J."/>
            <person name="Lindahl L."/>
            <person name="Liljas A."/>
            <person name="Lipton J.M."/>
            <person name="McAlear M.A."/>
            <person name="Moore P.B."/>
            <person name="Noller H.F."/>
            <person name="Ortega J."/>
            <person name="Panse V.G."/>
            <person name="Ramakrishnan V."/>
            <person name="Spahn C.M.T."/>
            <person name="Steitz T.A."/>
            <person name="Tchorzewski M."/>
            <person name="Tollervey D."/>
            <person name="Warren A.J."/>
            <person name="Williamson J.R."/>
            <person name="Wilson D."/>
            <person name="Yonath A."/>
            <person name="Yusupov M."/>
        </authorList>
    </citation>
    <scope>NOMENCLATURE</scope>
</reference>
<name>RL12B_YEAST</name>
<protein>
    <recommendedName>
        <fullName evidence="9">Large ribosomal subunit protein uL11B</fullName>
    </recommendedName>
    <alternativeName>
        <fullName evidence="10">60S ribosomal protein L12-B</fullName>
    </alternativeName>
    <alternativeName>
        <fullName>L15</fullName>
    </alternativeName>
    <alternativeName>
        <fullName>YL23</fullName>
    </alternativeName>
</protein>
<proteinExistence type="evidence at protein level"/>